<proteinExistence type="inferred from homology"/>
<name>NADA_SYNY3</name>
<keyword id="KW-0004">4Fe-4S</keyword>
<keyword id="KW-0963">Cytoplasm</keyword>
<keyword id="KW-0408">Iron</keyword>
<keyword id="KW-0411">Iron-sulfur</keyword>
<keyword id="KW-0479">Metal-binding</keyword>
<keyword id="KW-0662">Pyridine nucleotide biosynthesis</keyword>
<keyword id="KW-1185">Reference proteome</keyword>
<keyword id="KW-0808">Transferase</keyword>
<comment type="function">
    <text evidence="1">Catalyzes the condensation of iminoaspartate with dihydroxyacetone phosphate to form quinolinate.</text>
</comment>
<comment type="catalytic activity">
    <reaction evidence="1">
        <text>iminosuccinate + dihydroxyacetone phosphate = quinolinate + phosphate + 2 H2O + H(+)</text>
        <dbReference type="Rhea" id="RHEA:25888"/>
        <dbReference type="ChEBI" id="CHEBI:15377"/>
        <dbReference type="ChEBI" id="CHEBI:15378"/>
        <dbReference type="ChEBI" id="CHEBI:29959"/>
        <dbReference type="ChEBI" id="CHEBI:43474"/>
        <dbReference type="ChEBI" id="CHEBI:57642"/>
        <dbReference type="ChEBI" id="CHEBI:77875"/>
        <dbReference type="EC" id="2.5.1.72"/>
    </reaction>
    <physiologicalReaction direction="left-to-right" evidence="1">
        <dbReference type="Rhea" id="RHEA:25889"/>
    </physiologicalReaction>
</comment>
<comment type="cofactor">
    <cofactor evidence="1">
        <name>[4Fe-4S] cluster</name>
        <dbReference type="ChEBI" id="CHEBI:49883"/>
    </cofactor>
    <text evidence="1">Binds 1 [4Fe-4S] cluster per subunit.</text>
</comment>
<comment type="pathway">
    <text evidence="1">Cofactor biosynthesis; NAD(+) biosynthesis; quinolinate from iminoaspartate: step 1/1.</text>
</comment>
<comment type="subcellular location">
    <subcellularLocation>
        <location evidence="1">Cytoplasm</location>
    </subcellularLocation>
</comment>
<comment type="similarity">
    <text evidence="1">Belongs to the quinolinate synthase family. Type 2 subfamily.</text>
</comment>
<gene>
    <name evidence="1" type="primary">nadA</name>
    <name type="ordered locus">sll0622</name>
</gene>
<dbReference type="EC" id="2.5.1.72" evidence="1"/>
<dbReference type="EMBL" id="BA000022">
    <property type="protein sequence ID" value="BAA18685.1"/>
    <property type="molecule type" value="Genomic_DNA"/>
</dbReference>
<dbReference type="PIR" id="S76773">
    <property type="entry name" value="S76773"/>
</dbReference>
<dbReference type="SMR" id="P74578"/>
<dbReference type="FunCoup" id="P74578">
    <property type="interactions" value="298"/>
</dbReference>
<dbReference type="STRING" id="1148.gene:10500456"/>
<dbReference type="PaxDb" id="1148-1653774"/>
<dbReference type="EnsemblBacteria" id="BAA18685">
    <property type="protein sequence ID" value="BAA18685"/>
    <property type="gene ID" value="BAA18685"/>
</dbReference>
<dbReference type="KEGG" id="syn:sll0622"/>
<dbReference type="eggNOG" id="COG0379">
    <property type="taxonomic scope" value="Bacteria"/>
</dbReference>
<dbReference type="InParanoid" id="P74578"/>
<dbReference type="PhylomeDB" id="P74578"/>
<dbReference type="UniPathway" id="UPA00253">
    <property type="reaction ID" value="UER00327"/>
</dbReference>
<dbReference type="Proteomes" id="UP000001425">
    <property type="component" value="Chromosome"/>
</dbReference>
<dbReference type="GO" id="GO:0005829">
    <property type="term" value="C:cytosol"/>
    <property type="evidence" value="ECO:0000318"/>
    <property type="project" value="GO_Central"/>
</dbReference>
<dbReference type="GO" id="GO:0051539">
    <property type="term" value="F:4 iron, 4 sulfur cluster binding"/>
    <property type="evidence" value="ECO:0000318"/>
    <property type="project" value="GO_Central"/>
</dbReference>
<dbReference type="GO" id="GO:0046872">
    <property type="term" value="F:metal ion binding"/>
    <property type="evidence" value="ECO:0007669"/>
    <property type="project" value="UniProtKB-KW"/>
</dbReference>
<dbReference type="GO" id="GO:0008987">
    <property type="term" value="F:quinolinate synthetase A activity"/>
    <property type="evidence" value="ECO:0000318"/>
    <property type="project" value="GO_Central"/>
</dbReference>
<dbReference type="GO" id="GO:0034628">
    <property type="term" value="P:'de novo' NAD biosynthetic process from L-aspartate"/>
    <property type="evidence" value="ECO:0000318"/>
    <property type="project" value="GO_Central"/>
</dbReference>
<dbReference type="FunFam" id="3.40.50.10800:FF:000003">
    <property type="entry name" value="Quinolinate synthase A"/>
    <property type="match status" value="1"/>
</dbReference>
<dbReference type="Gene3D" id="3.40.50.10800">
    <property type="entry name" value="NadA-like"/>
    <property type="match status" value="3"/>
</dbReference>
<dbReference type="HAMAP" id="MF_00568">
    <property type="entry name" value="NadA_type2"/>
    <property type="match status" value="1"/>
</dbReference>
<dbReference type="InterPro" id="IPR003473">
    <property type="entry name" value="NadA"/>
</dbReference>
<dbReference type="InterPro" id="IPR036094">
    <property type="entry name" value="NadA_sf"/>
</dbReference>
<dbReference type="InterPro" id="IPR023066">
    <property type="entry name" value="Quinolinate_synth_type2"/>
</dbReference>
<dbReference type="NCBIfam" id="TIGR00550">
    <property type="entry name" value="nadA"/>
    <property type="match status" value="1"/>
</dbReference>
<dbReference type="NCBIfam" id="NF006878">
    <property type="entry name" value="PRK09375.1-2"/>
    <property type="match status" value="1"/>
</dbReference>
<dbReference type="PANTHER" id="PTHR30573:SF0">
    <property type="entry name" value="QUINOLINATE SYNTHASE, CHLOROPLASTIC"/>
    <property type="match status" value="1"/>
</dbReference>
<dbReference type="PANTHER" id="PTHR30573">
    <property type="entry name" value="QUINOLINATE SYNTHETASE A"/>
    <property type="match status" value="1"/>
</dbReference>
<dbReference type="Pfam" id="PF02445">
    <property type="entry name" value="NadA"/>
    <property type="match status" value="1"/>
</dbReference>
<dbReference type="SUPFAM" id="SSF142754">
    <property type="entry name" value="NadA-like"/>
    <property type="match status" value="1"/>
</dbReference>
<reference key="1">
    <citation type="journal article" date="1996" name="DNA Res.">
        <title>Sequence analysis of the genome of the unicellular cyanobacterium Synechocystis sp. strain PCC6803. II. Sequence determination of the entire genome and assignment of potential protein-coding regions.</title>
        <authorList>
            <person name="Kaneko T."/>
            <person name="Sato S."/>
            <person name="Kotani H."/>
            <person name="Tanaka A."/>
            <person name="Asamizu E."/>
            <person name="Nakamura Y."/>
            <person name="Miyajima N."/>
            <person name="Hirosawa M."/>
            <person name="Sugiura M."/>
            <person name="Sasamoto S."/>
            <person name="Kimura T."/>
            <person name="Hosouchi T."/>
            <person name="Matsuno A."/>
            <person name="Muraki A."/>
            <person name="Nakazaki N."/>
            <person name="Naruo K."/>
            <person name="Okumura S."/>
            <person name="Shimpo S."/>
            <person name="Takeuchi C."/>
            <person name="Wada T."/>
            <person name="Watanabe A."/>
            <person name="Yamada M."/>
            <person name="Yasuda M."/>
            <person name="Tabata S."/>
        </authorList>
    </citation>
    <scope>NUCLEOTIDE SEQUENCE [LARGE SCALE GENOMIC DNA]</scope>
    <source>
        <strain>ATCC 27184 / PCC 6803 / Kazusa</strain>
    </source>
</reference>
<sequence>MFTAVAPPQETLPRDLVGAIQSLKKELNAVILAHYYQEAAIQDIADYLGDSLGLSQQAASTDADVIVFAGVHFMAETAKILNPHKLVLLPDLEAGCSLADSCPPREFAEFKQRHPDHLVISYINCTAEIKALSDIICTSSNAVKIVQQLPPDQKIIFAPDRNLGRYVMEQTGREMVLWQGSCIVHETFSERRLLELKTQYPQAEIIAHPECEKAILRHADFIGSTTALLNYSGKSQGKEFIVGTEPGIIHQMEKLSPSKQFIPLPNNSNCDCNECPYMRLNTLEKLYWAMQRRSPEITLPEATMAAALKPIQRMLAMS</sequence>
<accession>P74578</accession>
<evidence type="ECO:0000255" key="1">
    <source>
        <dbReference type="HAMAP-Rule" id="MF_00568"/>
    </source>
</evidence>
<protein>
    <recommendedName>
        <fullName evidence="1">Quinolinate synthase</fullName>
        <ecNumber evidence="1">2.5.1.72</ecNumber>
    </recommendedName>
</protein>
<organism>
    <name type="scientific">Synechocystis sp. (strain ATCC 27184 / PCC 6803 / Kazusa)</name>
    <dbReference type="NCBI Taxonomy" id="1111708"/>
    <lineage>
        <taxon>Bacteria</taxon>
        <taxon>Bacillati</taxon>
        <taxon>Cyanobacteriota</taxon>
        <taxon>Cyanophyceae</taxon>
        <taxon>Synechococcales</taxon>
        <taxon>Merismopediaceae</taxon>
        <taxon>Synechocystis</taxon>
    </lineage>
</organism>
<feature type="chain" id="PRO_0000155797" description="Quinolinate synthase">
    <location>
        <begin position="1"/>
        <end position="318"/>
    </location>
</feature>
<feature type="binding site" evidence="1">
    <location>
        <position position="34"/>
    </location>
    <ligand>
        <name>iminosuccinate</name>
        <dbReference type="ChEBI" id="CHEBI:77875"/>
    </ligand>
</feature>
<feature type="binding site" evidence="1">
    <location>
        <position position="51"/>
    </location>
    <ligand>
        <name>iminosuccinate</name>
        <dbReference type="ChEBI" id="CHEBI:77875"/>
    </ligand>
</feature>
<feature type="binding site" evidence="1">
    <location>
        <position position="96"/>
    </location>
    <ligand>
        <name>[4Fe-4S] cluster</name>
        <dbReference type="ChEBI" id="CHEBI:49883"/>
    </ligand>
</feature>
<feature type="binding site" evidence="1">
    <location>
        <begin position="122"/>
        <end position="124"/>
    </location>
    <ligand>
        <name>iminosuccinate</name>
        <dbReference type="ChEBI" id="CHEBI:77875"/>
    </ligand>
</feature>
<feature type="binding site" evidence="1">
    <location>
        <position position="139"/>
    </location>
    <ligand>
        <name>iminosuccinate</name>
        <dbReference type="ChEBI" id="CHEBI:77875"/>
    </ligand>
</feature>
<feature type="binding site" evidence="1">
    <location>
        <position position="182"/>
    </location>
    <ligand>
        <name>[4Fe-4S] cluster</name>
        <dbReference type="ChEBI" id="CHEBI:49883"/>
    </ligand>
</feature>
<feature type="binding site" evidence="1">
    <location>
        <begin position="208"/>
        <end position="210"/>
    </location>
    <ligand>
        <name>iminosuccinate</name>
        <dbReference type="ChEBI" id="CHEBI:77875"/>
    </ligand>
</feature>
<feature type="binding site" evidence="1">
    <location>
        <position position="225"/>
    </location>
    <ligand>
        <name>iminosuccinate</name>
        <dbReference type="ChEBI" id="CHEBI:77875"/>
    </ligand>
</feature>
<feature type="binding site" evidence="1">
    <location>
        <position position="275"/>
    </location>
    <ligand>
        <name>[4Fe-4S] cluster</name>
        <dbReference type="ChEBI" id="CHEBI:49883"/>
    </ligand>
</feature>